<protein>
    <recommendedName>
        <fullName evidence="1">Lysophospholipid transporter LplT</fullName>
    </recommendedName>
</protein>
<dbReference type="EMBL" id="CU928158">
    <property type="protein sequence ID" value="CAQ90264.1"/>
    <property type="molecule type" value="Genomic_DNA"/>
</dbReference>
<dbReference type="RefSeq" id="WP_000004640.1">
    <property type="nucleotide sequence ID" value="NC_011740.1"/>
</dbReference>
<dbReference type="SMR" id="B7LNJ1"/>
<dbReference type="GeneID" id="75056194"/>
<dbReference type="KEGG" id="efe:EFER_2769"/>
<dbReference type="HOGENOM" id="CLU_047399_0_0_6"/>
<dbReference type="OrthoDB" id="9803968at2"/>
<dbReference type="Proteomes" id="UP000000745">
    <property type="component" value="Chromosome"/>
</dbReference>
<dbReference type="GO" id="GO:0005886">
    <property type="term" value="C:plasma membrane"/>
    <property type="evidence" value="ECO:0007669"/>
    <property type="project" value="UniProtKB-SubCell"/>
</dbReference>
<dbReference type="GO" id="GO:0051978">
    <property type="term" value="F:lysophospholipid:sodium symporter activity"/>
    <property type="evidence" value="ECO:0007669"/>
    <property type="project" value="InterPro"/>
</dbReference>
<dbReference type="CDD" id="cd06173">
    <property type="entry name" value="MFS_MefA_like"/>
    <property type="match status" value="1"/>
</dbReference>
<dbReference type="FunFam" id="1.20.1250.20:FF:000091">
    <property type="entry name" value="Lysophospholipid transporter LplT"/>
    <property type="match status" value="1"/>
</dbReference>
<dbReference type="Gene3D" id="1.20.1250.20">
    <property type="entry name" value="MFS general substrate transporter like domains"/>
    <property type="match status" value="1"/>
</dbReference>
<dbReference type="HAMAP" id="MF_01585">
    <property type="entry name" value="MFS_LplT"/>
    <property type="match status" value="1"/>
</dbReference>
<dbReference type="InterPro" id="IPR023727">
    <property type="entry name" value="LysoPLipid__transptr_LplT"/>
</dbReference>
<dbReference type="InterPro" id="IPR011701">
    <property type="entry name" value="MFS"/>
</dbReference>
<dbReference type="InterPro" id="IPR036259">
    <property type="entry name" value="MFS_trans_sf"/>
</dbReference>
<dbReference type="NCBIfam" id="NF008397">
    <property type="entry name" value="PRK11195.1"/>
    <property type="match status" value="1"/>
</dbReference>
<dbReference type="PANTHER" id="PTHR43266">
    <property type="entry name" value="MACROLIDE-EFFLUX PROTEIN"/>
    <property type="match status" value="1"/>
</dbReference>
<dbReference type="PANTHER" id="PTHR43266:SF2">
    <property type="entry name" value="MAJOR FACILITATOR SUPERFAMILY (MFS) PROFILE DOMAIN-CONTAINING PROTEIN"/>
    <property type="match status" value="1"/>
</dbReference>
<dbReference type="Pfam" id="PF07690">
    <property type="entry name" value="MFS_1"/>
    <property type="match status" value="1"/>
</dbReference>
<dbReference type="SUPFAM" id="SSF103473">
    <property type="entry name" value="MFS general substrate transporter"/>
    <property type="match status" value="1"/>
</dbReference>
<keyword id="KW-0997">Cell inner membrane</keyword>
<keyword id="KW-1003">Cell membrane</keyword>
<keyword id="KW-0445">Lipid transport</keyword>
<keyword id="KW-0472">Membrane</keyword>
<keyword id="KW-0812">Transmembrane</keyword>
<keyword id="KW-1133">Transmembrane helix</keyword>
<keyword id="KW-0813">Transport</keyword>
<evidence type="ECO:0000255" key="1">
    <source>
        <dbReference type="HAMAP-Rule" id="MF_01585"/>
    </source>
</evidence>
<comment type="function">
    <text evidence="1">Catalyzes the facilitated diffusion of 2-acyl-glycero-3-phosphoethanolamine (2-acyl-GPE) into the cell.</text>
</comment>
<comment type="subcellular location">
    <subcellularLocation>
        <location evidence="1">Cell inner membrane</location>
        <topology evidence="1">Multi-pass membrane protein</topology>
    </subcellularLocation>
</comment>
<comment type="similarity">
    <text evidence="1">Belongs to the major facilitator superfamily. LplT (TC 2.A.1.42) family.</text>
</comment>
<gene>
    <name evidence="1" type="primary">lplT</name>
    <name type="ordered locus">EFER_2769</name>
</gene>
<proteinExistence type="inferred from homology"/>
<reference key="1">
    <citation type="journal article" date="2009" name="PLoS Genet.">
        <title>Organised genome dynamics in the Escherichia coli species results in highly diverse adaptive paths.</title>
        <authorList>
            <person name="Touchon M."/>
            <person name="Hoede C."/>
            <person name="Tenaillon O."/>
            <person name="Barbe V."/>
            <person name="Baeriswyl S."/>
            <person name="Bidet P."/>
            <person name="Bingen E."/>
            <person name="Bonacorsi S."/>
            <person name="Bouchier C."/>
            <person name="Bouvet O."/>
            <person name="Calteau A."/>
            <person name="Chiapello H."/>
            <person name="Clermont O."/>
            <person name="Cruveiller S."/>
            <person name="Danchin A."/>
            <person name="Diard M."/>
            <person name="Dossat C."/>
            <person name="Karoui M.E."/>
            <person name="Frapy E."/>
            <person name="Garry L."/>
            <person name="Ghigo J.M."/>
            <person name="Gilles A.M."/>
            <person name="Johnson J."/>
            <person name="Le Bouguenec C."/>
            <person name="Lescat M."/>
            <person name="Mangenot S."/>
            <person name="Martinez-Jehanne V."/>
            <person name="Matic I."/>
            <person name="Nassif X."/>
            <person name="Oztas S."/>
            <person name="Petit M.A."/>
            <person name="Pichon C."/>
            <person name="Rouy Z."/>
            <person name="Ruf C.S."/>
            <person name="Schneider D."/>
            <person name="Tourret J."/>
            <person name="Vacherie B."/>
            <person name="Vallenet D."/>
            <person name="Medigue C."/>
            <person name="Rocha E.P.C."/>
            <person name="Denamur E."/>
        </authorList>
    </citation>
    <scope>NUCLEOTIDE SEQUENCE [LARGE SCALE GENOMIC DNA]</scope>
    <source>
        <strain>ATCC 35469 / DSM 13698 / BCRC 15582 / CCUG 18766 / IAM 14443 / JCM 21226 / LMG 7866 / NBRC 102419 / NCTC 12128 / CDC 0568-73</strain>
    </source>
</reference>
<organism>
    <name type="scientific">Escherichia fergusonii (strain ATCC 35469 / DSM 13698 / CCUG 18766 / IAM 14443 / JCM 21226 / LMG 7866 / NBRC 102419 / NCTC 12128 / CDC 0568-73)</name>
    <dbReference type="NCBI Taxonomy" id="585054"/>
    <lineage>
        <taxon>Bacteria</taxon>
        <taxon>Pseudomonadati</taxon>
        <taxon>Pseudomonadota</taxon>
        <taxon>Gammaproteobacteria</taxon>
        <taxon>Enterobacterales</taxon>
        <taxon>Enterobacteriaceae</taxon>
        <taxon>Escherichia</taxon>
    </lineage>
</organism>
<accession>B7LNJ1</accession>
<feature type="chain" id="PRO_1000201271" description="Lysophospholipid transporter LplT">
    <location>
        <begin position="1"/>
        <end position="397"/>
    </location>
</feature>
<feature type="topological domain" description="Periplasmic" evidence="1">
    <location>
        <begin position="1"/>
        <end position="17"/>
    </location>
</feature>
<feature type="transmembrane region" description="Helical" evidence="1">
    <location>
        <begin position="18"/>
        <end position="38"/>
    </location>
</feature>
<feature type="topological domain" description="Cytoplasmic" evidence="1">
    <location>
        <begin position="39"/>
        <end position="52"/>
    </location>
</feature>
<feature type="transmembrane region" description="Helical" evidence="1">
    <location>
        <begin position="53"/>
        <end position="73"/>
    </location>
</feature>
<feature type="topological domain" description="Periplasmic" evidence="1">
    <location>
        <begin position="74"/>
        <end position="90"/>
    </location>
</feature>
<feature type="transmembrane region" description="Helical" evidence="1">
    <location>
        <begin position="91"/>
        <end position="111"/>
    </location>
</feature>
<feature type="topological domain" description="Cytoplasmic" evidence="1">
    <location>
        <begin position="112"/>
        <end position="144"/>
    </location>
</feature>
<feature type="transmembrane region" description="Helical" evidence="1">
    <location>
        <begin position="145"/>
        <end position="165"/>
    </location>
</feature>
<feature type="topological domain" description="Periplasmic" evidence="1">
    <location>
        <position position="166"/>
    </location>
</feature>
<feature type="transmembrane region" description="Helical" evidence="1">
    <location>
        <begin position="167"/>
        <end position="187"/>
    </location>
</feature>
<feature type="topological domain" description="Cytoplasmic" evidence="1">
    <location>
        <begin position="188"/>
        <end position="226"/>
    </location>
</feature>
<feature type="transmembrane region" description="Helical" evidence="1">
    <location>
        <begin position="227"/>
        <end position="247"/>
    </location>
</feature>
<feature type="topological domain" description="Periplasmic" evidence="1">
    <location>
        <begin position="248"/>
        <end position="256"/>
    </location>
</feature>
<feature type="transmembrane region" description="Helical" evidence="1">
    <location>
        <begin position="257"/>
        <end position="277"/>
    </location>
</feature>
<feature type="topological domain" description="Cytoplasmic" evidence="1">
    <location>
        <begin position="278"/>
        <end position="280"/>
    </location>
</feature>
<feature type="transmembrane region" description="Helical" evidence="1">
    <location>
        <begin position="281"/>
        <end position="301"/>
    </location>
</feature>
<feature type="topological domain" description="Periplasmic" evidence="1">
    <location>
        <begin position="302"/>
        <end position="304"/>
    </location>
</feature>
<feature type="transmembrane region" description="Helical" evidence="1">
    <location>
        <begin position="305"/>
        <end position="325"/>
    </location>
</feature>
<feature type="topological domain" description="Cytoplasmic" evidence="1">
    <location>
        <begin position="326"/>
        <end position="343"/>
    </location>
</feature>
<feature type="transmembrane region" description="Helical" evidence="1">
    <location>
        <begin position="344"/>
        <end position="364"/>
    </location>
</feature>
<feature type="topological domain" description="Periplasmic" evidence="1">
    <location>
        <begin position="365"/>
        <end position="366"/>
    </location>
</feature>
<feature type="transmembrane region" description="Helical" evidence="1">
    <location>
        <begin position="367"/>
        <end position="387"/>
    </location>
</feature>
<feature type="topological domain" description="Cytoplasmic" evidence="1">
    <location>
        <begin position="388"/>
        <end position="397"/>
    </location>
</feature>
<sequence>MSESVHTNTSLWSKGMKAVIVAQFLSAFGDNALLFATLALLKAQFYPEWSQPVLQMVFVGAYILFAPFVGQVADSFAKGRVMMFANGLKLLGAASICFGFNPFVGYTLVGIGAAAYSPAKYGILGELTTGDKLVKANGLMEASTIAAILLGSVAGGVLADLHVLVALAACALAYAGAVAANIYIPKLAAARPGQSWNVLKMTCSFKSACTSLWQNGETRFSLVGTSLFWGAGVTLRFLLVLWVPVALGITDNATPTYLNAMVAIGIVLGAGAAAKLVTLETVSRCMPAGILIGVVVLFFSLQHELLPAYALLMLIGVLGGFFVVPLNALLQERGKKSVGAGNAIAVQNLGENSAMLLMLGIYSLAVLVGIPVVPIGIGFGTLFALAITALWIWQRRH</sequence>
<name>LPLT_ESCF3</name>